<sequence>MKFSYSFVQVVTLLLSLSPSVEGFTRSRNDACKPNHPFRPLPPSQPRTKTCHVVSNGHGKDDSKNIMKALHKCNNGGKVVFDANKVYTVGTALDMTFLKHIDLEVLGKIQFTNDTDYWQANSFKHGFQNATTFFQLGGEDVNVYGGGTLDGNGQVWYDLYAEDALILRPILFGVIGLKGGTIGPLKLRYSPQWYQLVANSSDVIFDGIDISGYSSSKNEAKNTDGWDTYRSDNIVIQNSVINNGDDCVSFKPNSTNILVQNLHCNGSHGISVGSLGQYKGEVDIVQNVLVYNISMYNASDGARIKVWPGVSSAMSEDLQGGGGLGSVKNVTYNQMYIENVDWAIEVTQCYGQKNLTLCNEYPSNLTISDIHFKNFRGTTSGKRDPNVGTIVCSSPNVCSDIYAENIDVKSPKGTDNFVCTNVDKSLLDVNCA</sequence>
<reference key="1">
    <citation type="journal article" date="2005" name="Nature">
        <title>Genomic sequence of the pathogenic and allergenic filamentous fungus Aspergillus fumigatus.</title>
        <authorList>
            <person name="Nierman W.C."/>
            <person name="Pain A."/>
            <person name="Anderson M.J."/>
            <person name="Wortman J.R."/>
            <person name="Kim H.S."/>
            <person name="Arroyo J."/>
            <person name="Berriman M."/>
            <person name="Abe K."/>
            <person name="Archer D.B."/>
            <person name="Bermejo C."/>
            <person name="Bennett J.W."/>
            <person name="Bowyer P."/>
            <person name="Chen D."/>
            <person name="Collins M."/>
            <person name="Coulsen R."/>
            <person name="Davies R."/>
            <person name="Dyer P.S."/>
            <person name="Farman M.L."/>
            <person name="Fedorova N."/>
            <person name="Fedorova N.D."/>
            <person name="Feldblyum T.V."/>
            <person name="Fischer R."/>
            <person name="Fosker N."/>
            <person name="Fraser A."/>
            <person name="Garcia J.L."/>
            <person name="Garcia M.J."/>
            <person name="Goble A."/>
            <person name="Goldman G.H."/>
            <person name="Gomi K."/>
            <person name="Griffith-Jones S."/>
            <person name="Gwilliam R."/>
            <person name="Haas B.J."/>
            <person name="Haas H."/>
            <person name="Harris D.E."/>
            <person name="Horiuchi H."/>
            <person name="Huang J."/>
            <person name="Humphray S."/>
            <person name="Jimenez J."/>
            <person name="Keller N."/>
            <person name="Khouri H."/>
            <person name="Kitamoto K."/>
            <person name="Kobayashi T."/>
            <person name="Konzack S."/>
            <person name="Kulkarni R."/>
            <person name="Kumagai T."/>
            <person name="Lafton A."/>
            <person name="Latge J.-P."/>
            <person name="Li W."/>
            <person name="Lord A."/>
            <person name="Lu C."/>
            <person name="Majoros W.H."/>
            <person name="May G.S."/>
            <person name="Miller B.L."/>
            <person name="Mohamoud Y."/>
            <person name="Molina M."/>
            <person name="Monod M."/>
            <person name="Mouyna I."/>
            <person name="Mulligan S."/>
            <person name="Murphy L.D."/>
            <person name="O'Neil S."/>
            <person name="Paulsen I."/>
            <person name="Penalva M.A."/>
            <person name="Pertea M."/>
            <person name="Price C."/>
            <person name="Pritchard B.L."/>
            <person name="Quail M.A."/>
            <person name="Rabbinowitsch E."/>
            <person name="Rawlins N."/>
            <person name="Rajandream M.A."/>
            <person name="Reichard U."/>
            <person name="Renauld H."/>
            <person name="Robson G.D."/>
            <person name="Rodriguez de Cordoba S."/>
            <person name="Rodriguez-Pena J.M."/>
            <person name="Ronning C.M."/>
            <person name="Rutter S."/>
            <person name="Salzberg S.L."/>
            <person name="Sanchez M."/>
            <person name="Sanchez-Ferrero J.C."/>
            <person name="Saunders D."/>
            <person name="Seeger K."/>
            <person name="Squares R."/>
            <person name="Squares S."/>
            <person name="Takeuchi M."/>
            <person name="Tekaia F."/>
            <person name="Turner G."/>
            <person name="Vazquez de Aldana C.R."/>
            <person name="Weidman J."/>
            <person name="White O."/>
            <person name="Woodward J.R."/>
            <person name="Yu J.-H."/>
            <person name="Fraser C.M."/>
            <person name="Galagan J.E."/>
            <person name="Asai K."/>
            <person name="Machida M."/>
            <person name="Hall N."/>
            <person name="Barrell B.G."/>
            <person name="Denning D.W."/>
        </authorList>
    </citation>
    <scope>NUCLEOTIDE SEQUENCE [LARGE SCALE GENOMIC DNA]</scope>
    <source>
        <strain>ATCC MYA-4609 / CBS 101355 / FGSC A1100 / Af293</strain>
    </source>
</reference>
<protein>
    <recommendedName>
        <fullName>Probable exopolygalacturonase X</fullName>
        <shortName>ExoPG</shortName>
        <ecNumber>3.2.1.67</ecNumber>
    </recommendedName>
    <alternativeName>
        <fullName>Galacturan 1,4-alpha-galacturonidase</fullName>
    </alternativeName>
    <alternativeName>
        <fullName>Poly(1,4-alpha-D-galacturonide)galacturonohydrolase</fullName>
    </alternativeName>
</protein>
<feature type="signal peptide" evidence="2">
    <location>
        <begin position="1"/>
        <end position="23"/>
    </location>
</feature>
<feature type="chain" id="PRO_0000393668" description="Probable exopolygalacturonase X">
    <location>
        <begin position="24"/>
        <end position="432"/>
    </location>
</feature>
<feature type="repeat" description="PbH1 1">
    <location>
        <begin position="231"/>
        <end position="252"/>
    </location>
</feature>
<feature type="repeat" description="PbH1 2">
    <location>
        <begin position="254"/>
        <end position="274"/>
    </location>
</feature>
<feature type="repeat" description="PbH1 3">
    <location>
        <begin position="285"/>
        <end position="306"/>
    </location>
</feature>
<feature type="repeat" description="PbH1 4">
    <location>
        <begin position="327"/>
        <end position="348"/>
    </location>
</feature>
<feature type="repeat" description="PbH1 5">
    <location>
        <begin position="362"/>
        <end position="394"/>
    </location>
</feature>
<feature type="active site" description="Proton donor" evidence="3">
    <location>
        <position position="245"/>
    </location>
</feature>
<feature type="active site" evidence="3">
    <location>
        <position position="268"/>
    </location>
</feature>
<feature type="glycosylation site" description="N-linked (GlcNAc...) asparagine" evidence="2">
    <location>
        <position position="113"/>
    </location>
</feature>
<feature type="glycosylation site" description="N-linked (GlcNAc...) asparagine" evidence="2">
    <location>
        <position position="129"/>
    </location>
</feature>
<feature type="glycosylation site" description="N-linked (GlcNAc...) asparagine" evidence="2">
    <location>
        <position position="199"/>
    </location>
</feature>
<feature type="glycosylation site" description="N-linked (GlcNAc...) asparagine" evidence="2">
    <location>
        <position position="253"/>
    </location>
</feature>
<feature type="glycosylation site" description="N-linked (GlcNAc...) asparagine" evidence="2">
    <location>
        <position position="265"/>
    </location>
</feature>
<feature type="glycosylation site" description="N-linked (GlcNAc...) asparagine" evidence="2">
    <location>
        <position position="292"/>
    </location>
</feature>
<feature type="glycosylation site" description="N-linked (GlcNAc...) asparagine" evidence="2">
    <location>
        <position position="297"/>
    </location>
</feature>
<feature type="glycosylation site" description="N-linked (GlcNAc...) asparagine" evidence="2">
    <location>
        <position position="329"/>
    </location>
</feature>
<feature type="glycosylation site" description="N-linked (GlcNAc...) asparagine" evidence="2">
    <location>
        <position position="354"/>
    </location>
</feature>
<feature type="glycosylation site" description="N-linked (GlcNAc...) asparagine" evidence="2">
    <location>
        <position position="364"/>
    </location>
</feature>
<feature type="disulfide bond" evidence="1">
    <location>
        <begin position="247"/>
        <end position="264"/>
    </location>
</feature>
<feature type="disulfide bond" evidence="1">
    <location>
        <begin position="392"/>
        <end position="398"/>
    </location>
</feature>
<keyword id="KW-0961">Cell wall biogenesis/degradation</keyword>
<keyword id="KW-1015">Disulfide bond</keyword>
<keyword id="KW-0325">Glycoprotein</keyword>
<keyword id="KW-0326">Glycosidase</keyword>
<keyword id="KW-0378">Hydrolase</keyword>
<keyword id="KW-1185">Reference proteome</keyword>
<keyword id="KW-0677">Repeat</keyword>
<keyword id="KW-0964">Secreted</keyword>
<keyword id="KW-0732">Signal</keyword>
<evidence type="ECO:0000250" key="1"/>
<evidence type="ECO:0000255" key="2"/>
<evidence type="ECO:0000255" key="3">
    <source>
        <dbReference type="PROSITE-ProRule" id="PRU10052"/>
    </source>
</evidence>
<evidence type="ECO:0000305" key="4"/>
<name>PGLRX_ASPFU</name>
<dbReference type="EC" id="3.2.1.67"/>
<dbReference type="EMBL" id="AAHF01000012">
    <property type="protein sequence ID" value="EAL85740.1"/>
    <property type="status" value="ALT_SEQ"/>
    <property type="molecule type" value="Genomic_DNA"/>
</dbReference>
<dbReference type="RefSeq" id="XP_747778.1">
    <property type="nucleotide sequence ID" value="XM_742685.1"/>
</dbReference>
<dbReference type="SMR" id="Q4WCZ8"/>
<dbReference type="STRING" id="330879.Q4WCZ8"/>
<dbReference type="GlyCosmos" id="Q4WCZ8">
    <property type="glycosylation" value="10 sites, No reported glycans"/>
</dbReference>
<dbReference type="GeneID" id="3505169"/>
<dbReference type="KEGG" id="afm:AFUA_6G02980"/>
<dbReference type="eggNOG" id="ENOG502QPPR">
    <property type="taxonomic scope" value="Eukaryota"/>
</dbReference>
<dbReference type="HOGENOM" id="CLU_016031_1_0_1"/>
<dbReference type="InParanoid" id="Q4WCZ8"/>
<dbReference type="OrthoDB" id="187139at2759"/>
<dbReference type="Proteomes" id="UP000002530">
    <property type="component" value="Chromosome 6"/>
</dbReference>
<dbReference type="GO" id="GO:0005576">
    <property type="term" value="C:extracellular region"/>
    <property type="evidence" value="ECO:0000250"/>
    <property type="project" value="UniProtKB"/>
</dbReference>
<dbReference type="GO" id="GO:0047911">
    <property type="term" value="F:galacturan 1,4-alpha-galacturonidase activity"/>
    <property type="evidence" value="ECO:0007669"/>
    <property type="project" value="UniProtKB-EC"/>
</dbReference>
<dbReference type="GO" id="GO:0004650">
    <property type="term" value="F:polygalacturonase activity"/>
    <property type="evidence" value="ECO:0000250"/>
    <property type="project" value="UniProtKB"/>
</dbReference>
<dbReference type="GO" id="GO:0071555">
    <property type="term" value="P:cell wall organization"/>
    <property type="evidence" value="ECO:0007669"/>
    <property type="project" value="UniProtKB-KW"/>
</dbReference>
<dbReference type="GO" id="GO:0045490">
    <property type="term" value="P:pectin catabolic process"/>
    <property type="evidence" value="ECO:0000250"/>
    <property type="project" value="UniProtKB"/>
</dbReference>
<dbReference type="FunFam" id="2.160.20.10:FF:000027">
    <property type="entry name" value="Probable exopolygalacturonase X"/>
    <property type="match status" value="1"/>
</dbReference>
<dbReference type="Gene3D" id="2.160.20.10">
    <property type="entry name" value="Single-stranded right-handed beta-helix, Pectin lyase-like"/>
    <property type="match status" value="1"/>
</dbReference>
<dbReference type="InterPro" id="IPR000743">
    <property type="entry name" value="Glyco_hydro_28"/>
</dbReference>
<dbReference type="InterPro" id="IPR006626">
    <property type="entry name" value="PbH1"/>
</dbReference>
<dbReference type="InterPro" id="IPR012334">
    <property type="entry name" value="Pectin_lyas_fold"/>
</dbReference>
<dbReference type="InterPro" id="IPR011050">
    <property type="entry name" value="Pectin_lyase_fold/virulence"/>
</dbReference>
<dbReference type="PANTHER" id="PTHR31736">
    <property type="match status" value="1"/>
</dbReference>
<dbReference type="PANTHER" id="PTHR31736:SF14">
    <property type="entry name" value="EXOPOLYGALACTURONASE X-1-RELATED"/>
    <property type="match status" value="1"/>
</dbReference>
<dbReference type="Pfam" id="PF00295">
    <property type="entry name" value="Glyco_hydro_28"/>
    <property type="match status" value="1"/>
</dbReference>
<dbReference type="SMART" id="SM00710">
    <property type="entry name" value="PbH1"/>
    <property type="match status" value="5"/>
</dbReference>
<dbReference type="SUPFAM" id="SSF51126">
    <property type="entry name" value="Pectin lyase-like"/>
    <property type="match status" value="1"/>
</dbReference>
<dbReference type="PROSITE" id="PS00502">
    <property type="entry name" value="POLYGALACTURONASE"/>
    <property type="match status" value="1"/>
</dbReference>
<proteinExistence type="inferred from homology"/>
<gene>
    <name type="primary">pgaX</name>
    <name type="ORF">AFUA_6G02980</name>
</gene>
<accession>Q4WCZ8</accession>
<organism>
    <name type="scientific">Aspergillus fumigatus (strain ATCC MYA-4609 / CBS 101355 / FGSC A1100 / Af293)</name>
    <name type="common">Neosartorya fumigata</name>
    <dbReference type="NCBI Taxonomy" id="330879"/>
    <lineage>
        <taxon>Eukaryota</taxon>
        <taxon>Fungi</taxon>
        <taxon>Dikarya</taxon>
        <taxon>Ascomycota</taxon>
        <taxon>Pezizomycotina</taxon>
        <taxon>Eurotiomycetes</taxon>
        <taxon>Eurotiomycetidae</taxon>
        <taxon>Eurotiales</taxon>
        <taxon>Aspergillaceae</taxon>
        <taxon>Aspergillus</taxon>
        <taxon>Aspergillus subgen. Fumigati</taxon>
    </lineage>
</organism>
<comment type="function">
    <text evidence="1">Specific in hydrolyzing the terminal glycosidic bond of polygalacturonic acid and oligogalacturonates.</text>
</comment>
<comment type="catalytic activity">
    <reaction>
        <text>[(1-&gt;4)-alpha-D-galacturonosyl](n) + H2O = alpha-D-galacturonate + [(1-&gt;4)-alpha-D-galacturonosyl](n-1)</text>
        <dbReference type="Rhea" id="RHEA:14117"/>
        <dbReference type="Rhea" id="RHEA-COMP:14570"/>
        <dbReference type="Rhea" id="RHEA-COMP:14572"/>
        <dbReference type="ChEBI" id="CHEBI:15377"/>
        <dbReference type="ChEBI" id="CHEBI:58658"/>
        <dbReference type="ChEBI" id="CHEBI:140523"/>
        <dbReference type="EC" id="3.2.1.67"/>
    </reaction>
</comment>
<comment type="subcellular location">
    <subcellularLocation>
        <location evidence="1">Secreted</location>
    </subcellularLocation>
</comment>
<comment type="similarity">
    <text evidence="4">Belongs to the glycosyl hydrolase 28 family.</text>
</comment>
<comment type="sequence caution" evidence="4">
    <conflict type="erroneous gene model prediction">
        <sequence resource="EMBL-CDS" id="EAL85740"/>
    </conflict>
</comment>